<sequence>ILKKDNYSYISFYNALIHEGYKDLAALLHSGIPVISSSNGGKDSVGGITS</sequence>
<comment type="function">
    <text evidence="1">Oligomeric Apaf-1 mediates the cytochrome c-dependent autocatalytic activation of pro-caspase 9 (Apaf-3), leading to the activation of caspase-3 and apoptosis. This activation requires ATP (By similarity).</text>
</comment>
<comment type="subunit">
    <text evidence="2">Monomer. Oligomerizes to a heptameric ring, known as the apoptosome, upon binding of cytochrome c and dATP. Oligomeric Apaf-1 and pro-caspase-9 bind to each other via their respective NH2-terminal CARD domains and consecutively mature caspase-9 is released from the complex. Interacts with APIP (By similarity). Interacts (via CARD and NACHT domains) with NAIP/BIRC1 (via NACHT domain) (By similarity). Interacts with CIAO2A (By similarity).</text>
</comment>
<comment type="domain">
    <text>The CARD domain mediates interaction with APIP.</text>
</comment>
<comment type="domain">
    <text evidence="1">The monomeric form is autoinhibited in a closed conformation through a bound ADP at the nucleotide binding site. Exchange of ADP for ATP and binding of cytochrome c trigger a large conformational change where the first WD repeat region swings out, allowing the NB-ARC domain to rotate and expose the contact areas for oligomerization (By similarity).</text>
</comment>
<comment type="miscellaneous">
    <text evidence="1">Physiological concentrations of calcium ions negatively affect the assembly of apoptosome by inhibiting nucleotide exchange in the monomeric form.</text>
</comment>
<organism>
    <name type="scientific">Canis lupus familiaris</name>
    <name type="common">Dog</name>
    <name type="synonym">Canis familiaris</name>
    <dbReference type="NCBI Taxonomy" id="9615"/>
    <lineage>
        <taxon>Eukaryota</taxon>
        <taxon>Metazoa</taxon>
        <taxon>Chordata</taxon>
        <taxon>Craniata</taxon>
        <taxon>Vertebrata</taxon>
        <taxon>Euteleostomi</taxon>
        <taxon>Mammalia</taxon>
        <taxon>Eutheria</taxon>
        <taxon>Laurasiatheria</taxon>
        <taxon>Carnivora</taxon>
        <taxon>Caniformia</taxon>
        <taxon>Canidae</taxon>
        <taxon>Canis</taxon>
    </lineage>
</organism>
<protein>
    <recommendedName>
        <fullName>Apoptotic protease-activating factor 1</fullName>
        <shortName>APAF-1</shortName>
    </recommendedName>
</protein>
<feature type="chain" id="PRO_0000050843" description="Apoptotic protease-activating factor 1">
    <location>
        <begin position="1" status="less than"/>
        <end position="50" status="greater than"/>
    </location>
</feature>
<feature type="domain" description="CARD" evidence="3">
    <location>
        <begin position="1" status="less than"/>
        <end position="31"/>
    </location>
</feature>
<feature type="domain" description="NB-ARC">
    <location>
        <begin position="46"/>
        <end position="50" status="greater than"/>
    </location>
</feature>
<feature type="non-terminal residue">
    <location>
        <position position="1"/>
    </location>
</feature>
<feature type="non-terminal residue">
    <location>
        <position position="50"/>
    </location>
</feature>
<gene>
    <name type="primary">APAF1</name>
</gene>
<evidence type="ECO:0000250" key="1"/>
<evidence type="ECO:0000250" key="2">
    <source>
        <dbReference type="UniProtKB" id="O14727"/>
    </source>
</evidence>
<evidence type="ECO:0000255" key="3">
    <source>
        <dbReference type="PROSITE-ProRule" id="PRU00046"/>
    </source>
</evidence>
<name>APAF_CANLF</name>
<proteinExistence type="inferred from homology"/>
<accession>Q9GL23</accession>
<keyword id="KW-0053">Apoptosis</keyword>
<keyword id="KW-0067">ATP-binding</keyword>
<keyword id="KW-0106">Calcium</keyword>
<keyword id="KW-0547">Nucleotide-binding</keyword>
<keyword id="KW-1185">Reference proteome</keyword>
<dbReference type="EMBL" id="AJ299439">
    <property type="protein sequence ID" value="CAC17122.1"/>
    <property type="status" value="ALT_TERM"/>
    <property type="molecule type" value="Genomic_DNA"/>
</dbReference>
<dbReference type="SMR" id="Q9GL23"/>
<dbReference type="FunCoup" id="Q9GL23">
    <property type="interactions" value="1194"/>
</dbReference>
<dbReference type="STRING" id="9615.ENSCAFP00000036296"/>
<dbReference type="PaxDb" id="9612-ENSCAFP00000009806"/>
<dbReference type="eggNOG" id="KOG4155">
    <property type="taxonomic scope" value="Eukaryota"/>
</dbReference>
<dbReference type="eggNOG" id="KOG4658">
    <property type="taxonomic scope" value="Eukaryota"/>
</dbReference>
<dbReference type="InParanoid" id="Q9GL23"/>
<dbReference type="OrthoDB" id="1357022at2759"/>
<dbReference type="Proteomes" id="UP000002254">
    <property type="component" value="Unplaced"/>
</dbReference>
<dbReference type="Proteomes" id="UP000694429">
    <property type="component" value="Unplaced"/>
</dbReference>
<dbReference type="Proteomes" id="UP000694542">
    <property type="component" value="Unplaced"/>
</dbReference>
<dbReference type="Proteomes" id="UP000805418">
    <property type="component" value="Unplaced"/>
</dbReference>
<dbReference type="GO" id="GO:0005524">
    <property type="term" value="F:ATP binding"/>
    <property type="evidence" value="ECO:0007669"/>
    <property type="project" value="UniProtKB-KW"/>
</dbReference>
<dbReference type="GO" id="GO:0006915">
    <property type="term" value="P:apoptotic process"/>
    <property type="evidence" value="ECO:0007669"/>
    <property type="project" value="UniProtKB-KW"/>
</dbReference>
<reference key="1">
    <citation type="journal article" date="2001" name="Anim. Genet.">
        <title>Physical and linkage mapping of the canine phosphate carrier (SLC25A3) and apoptotic activating factor 1 (APAF1) genes to canine chromosome 15.</title>
        <authorList>
            <person name="Debenham S."/>
            <person name="Ricketts P."/>
            <person name="Holmes N.G."/>
            <person name="Thomas R."/>
            <person name="Breen M."/>
            <person name="Binns M."/>
        </authorList>
    </citation>
    <scope>NUCLEOTIDE SEQUENCE [GENOMIC DNA]</scope>
</reference>